<feature type="chain" id="PRO_1000011414" description="Ribonuclease T">
    <location>
        <begin position="1"/>
        <end position="226"/>
    </location>
</feature>
<feature type="domain" description="Exonuclease" evidence="1">
    <location>
        <begin position="20"/>
        <end position="194"/>
    </location>
</feature>
<feature type="active site" description="Proton donor/acceptor" evidence="1">
    <location>
        <position position="181"/>
    </location>
</feature>
<feature type="binding site" evidence="1">
    <location>
        <position position="23"/>
    </location>
    <ligand>
        <name>Mg(2+)</name>
        <dbReference type="ChEBI" id="CHEBI:18420"/>
        <label>1</label>
        <note>catalytic</note>
    </ligand>
</feature>
<feature type="binding site" evidence="1">
    <location>
        <position position="23"/>
    </location>
    <ligand>
        <name>Mg(2+)</name>
        <dbReference type="ChEBI" id="CHEBI:18420"/>
        <label>2</label>
        <note>catalytic</note>
    </ligand>
</feature>
<feature type="binding site" evidence="1">
    <location>
        <position position="25"/>
    </location>
    <ligand>
        <name>Mg(2+)</name>
        <dbReference type="ChEBI" id="CHEBI:18420"/>
        <label>2</label>
        <note>catalytic</note>
    </ligand>
</feature>
<feature type="binding site" evidence="1">
    <location>
        <position position="181"/>
    </location>
    <ligand>
        <name>Mg(2+)</name>
        <dbReference type="ChEBI" id="CHEBI:18420"/>
        <label>2</label>
        <note>catalytic</note>
    </ligand>
</feature>
<feature type="binding site" evidence="1">
    <location>
        <position position="186"/>
    </location>
    <ligand>
        <name>Mg(2+)</name>
        <dbReference type="ChEBI" id="CHEBI:18420"/>
        <label>2</label>
        <note>catalytic</note>
    </ligand>
</feature>
<feature type="site" description="Important for substrate binding and specificity" evidence="1">
    <location>
        <position position="29"/>
    </location>
</feature>
<feature type="site" description="Important for substrate binding and specificity" evidence="1">
    <location>
        <position position="77"/>
    </location>
</feature>
<feature type="site" description="Important for substrate binding and specificity" evidence="1">
    <location>
        <position position="124"/>
    </location>
</feature>
<feature type="site" description="Important for substrate binding and specificity" evidence="1">
    <location>
        <position position="146"/>
    </location>
</feature>
<proteinExistence type="inferred from homology"/>
<sequence length="226" mass="24969">MPDICDSNKLNHRFRGYYPVVIDVETAGFNANTDALLEIAVTLLKMNDDGILVLDKTVHFHIEPFEGANLEPEALAFNGIDPTNPLRGAVSEKEAFLEIFKTVKKGQKASDCHRSIIVAHNAAFDLSFVNKAIERNDLKRSPFHPFASFDTATLAGLSIGHTVLAKACKMAGIDFDNKEAHSALYDTERTAELFCHIVNRWKALGGWPLATPEQSAIENTDEKIES</sequence>
<keyword id="KW-0269">Exonuclease</keyword>
<keyword id="KW-0378">Hydrolase</keyword>
<keyword id="KW-0460">Magnesium</keyword>
<keyword id="KW-0479">Metal-binding</keyword>
<keyword id="KW-0540">Nuclease</keyword>
<keyword id="KW-1185">Reference proteome</keyword>
<keyword id="KW-0819">tRNA processing</keyword>
<name>RNT_SHEDO</name>
<comment type="function">
    <text evidence="1">Trims short 3' overhangs of a variety of RNA species, leaving a one or two nucleotide 3' overhang. Responsible for the end-turnover of tRNA: specifically removes the terminal AMP residue from uncharged tRNA (tRNA-C-C-A). Also appears to be involved in tRNA biosynthesis.</text>
</comment>
<comment type="cofactor">
    <cofactor evidence="1">
        <name>Mg(2+)</name>
        <dbReference type="ChEBI" id="CHEBI:18420"/>
    </cofactor>
    <text evidence="1">Binds two Mg(2+) per subunit. The active form of the enzyme binds two Mg(2+) ions in its active site. The first Mg(2+) forms only one salt bridge with the protein.</text>
</comment>
<comment type="subunit">
    <text evidence="1">Homodimer.</text>
</comment>
<comment type="similarity">
    <text evidence="1">Belongs to the RNase T family.</text>
</comment>
<organism>
    <name type="scientific">Shewanella denitrificans (strain OS217 / ATCC BAA-1090 / DSM 15013)</name>
    <dbReference type="NCBI Taxonomy" id="318161"/>
    <lineage>
        <taxon>Bacteria</taxon>
        <taxon>Pseudomonadati</taxon>
        <taxon>Pseudomonadota</taxon>
        <taxon>Gammaproteobacteria</taxon>
        <taxon>Alteromonadales</taxon>
        <taxon>Shewanellaceae</taxon>
        <taxon>Shewanella</taxon>
    </lineage>
</organism>
<dbReference type="EC" id="3.1.13.-" evidence="1"/>
<dbReference type="EMBL" id="CP000302">
    <property type="protein sequence ID" value="ABE54683.1"/>
    <property type="molecule type" value="Genomic_DNA"/>
</dbReference>
<dbReference type="RefSeq" id="WP_011495841.1">
    <property type="nucleotide sequence ID" value="NC_007954.1"/>
</dbReference>
<dbReference type="SMR" id="Q12PE3"/>
<dbReference type="STRING" id="318161.Sden_1397"/>
<dbReference type="KEGG" id="sdn:Sden_1397"/>
<dbReference type="eggNOG" id="COG0847">
    <property type="taxonomic scope" value="Bacteria"/>
</dbReference>
<dbReference type="HOGENOM" id="CLU_082724_0_0_6"/>
<dbReference type="OrthoDB" id="9778264at2"/>
<dbReference type="Proteomes" id="UP000001982">
    <property type="component" value="Chromosome"/>
</dbReference>
<dbReference type="GO" id="GO:0005829">
    <property type="term" value="C:cytosol"/>
    <property type="evidence" value="ECO:0007669"/>
    <property type="project" value="TreeGrafter"/>
</dbReference>
<dbReference type="GO" id="GO:0008408">
    <property type="term" value="F:3'-5' exonuclease activity"/>
    <property type="evidence" value="ECO:0007669"/>
    <property type="project" value="TreeGrafter"/>
</dbReference>
<dbReference type="GO" id="GO:0000287">
    <property type="term" value="F:magnesium ion binding"/>
    <property type="evidence" value="ECO:0007669"/>
    <property type="project" value="UniProtKB-UniRule"/>
</dbReference>
<dbReference type="GO" id="GO:0003676">
    <property type="term" value="F:nucleic acid binding"/>
    <property type="evidence" value="ECO:0007669"/>
    <property type="project" value="InterPro"/>
</dbReference>
<dbReference type="GO" id="GO:0016896">
    <property type="term" value="F:RNA exonuclease activity, producing 5'-phosphomonoesters"/>
    <property type="evidence" value="ECO:0007669"/>
    <property type="project" value="UniProtKB-UniRule"/>
</dbReference>
<dbReference type="GO" id="GO:0045004">
    <property type="term" value="P:DNA replication proofreading"/>
    <property type="evidence" value="ECO:0007669"/>
    <property type="project" value="TreeGrafter"/>
</dbReference>
<dbReference type="GO" id="GO:0008033">
    <property type="term" value="P:tRNA processing"/>
    <property type="evidence" value="ECO:0007669"/>
    <property type="project" value="UniProtKB-KW"/>
</dbReference>
<dbReference type="CDD" id="cd06134">
    <property type="entry name" value="RNaseT"/>
    <property type="match status" value="1"/>
</dbReference>
<dbReference type="FunFam" id="3.30.420.10:FF:000009">
    <property type="entry name" value="Ribonuclease T"/>
    <property type="match status" value="1"/>
</dbReference>
<dbReference type="Gene3D" id="3.30.420.10">
    <property type="entry name" value="Ribonuclease H-like superfamily/Ribonuclease H"/>
    <property type="match status" value="1"/>
</dbReference>
<dbReference type="HAMAP" id="MF_00157">
    <property type="entry name" value="RNase_T"/>
    <property type="match status" value="1"/>
</dbReference>
<dbReference type="InterPro" id="IPR013520">
    <property type="entry name" value="Exonuclease_RNaseT/DNA_pol3"/>
</dbReference>
<dbReference type="InterPro" id="IPR005987">
    <property type="entry name" value="RNase_T"/>
</dbReference>
<dbReference type="InterPro" id="IPR012337">
    <property type="entry name" value="RNaseH-like_sf"/>
</dbReference>
<dbReference type="InterPro" id="IPR036397">
    <property type="entry name" value="RNaseH_sf"/>
</dbReference>
<dbReference type="NCBIfam" id="TIGR01298">
    <property type="entry name" value="RNaseT"/>
    <property type="match status" value="1"/>
</dbReference>
<dbReference type="PANTHER" id="PTHR30231">
    <property type="entry name" value="DNA POLYMERASE III SUBUNIT EPSILON"/>
    <property type="match status" value="1"/>
</dbReference>
<dbReference type="PANTHER" id="PTHR30231:SF2">
    <property type="entry name" value="RIBONUCLEASE T"/>
    <property type="match status" value="1"/>
</dbReference>
<dbReference type="Pfam" id="PF00929">
    <property type="entry name" value="RNase_T"/>
    <property type="match status" value="1"/>
</dbReference>
<dbReference type="SMART" id="SM00479">
    <property type="entry name" value="EXOIII"/>
    <property type="match status" value="1"/>
</dbReference>
<dbReference type="SUPFAM" id="SSF53098">
    <property type="entry name" value="Ribonuclease H-like"/>
    <property type="match status" value="1"/>
</dbReference>
<evidence type="ECO:0000255" key="1">
    <source>
        <dbReference type="HAMAP-Rule" id="MF_00157"/>
    </source>
</evidence>
<gene>
    <name evidence="1" type="primary">rnt</name>
    <name type="ordered locus">Sden_1397</name>
</gene>
<accession>Q12PE3</accession>
<reference key="1">
    <citation type="submission" date="2006-03" db="EMBL/GenBank/DDBJ databases">
        <title>Complete sequence of Shewanella denitrificans OS217.</title>
        <authorList>
            <consortium name="US DOE Joint Genome Institute"/>
            <person name="Copeland A."/>
            <person name="Lucas S."/>
            <person name="Lapidus A."/>
            <person name="Barry K."/>
            <person name="Detter J.C."/>
            <person name="Glavina del Rio T."/>
            <person name="Hammon N."/>
            <person name="Israni S."/>
            <person name="Dalin E."/>
            <person name="Tice H."/>
            <person name="Pitluck S."/>
            <person name="Brettin T."/>
            <person name="Bruce D."/>
            <person name="Han C."/>
            <person name="Tapia R."/>
            <person name="Gilna P."/>
            <person name="Kiss H."/>
            <person name="Schmutz J."/>
            <person name="Larimer F."/>
            <person name="Land M."/>
            <person name="Hauser L."/>
            <person name="Kyrpides N."/>
            <person name="Lykidis A."/>
            <person name="Richardson P."/>
        </authorList>
    </citation>
    <scope>NUCLEOTIDE SEQUENCE [LARGE SCALE GENOMIC DNA]</scope>
    <source>
        <strain>OS217 / ATCC BAA-1090 / DSM 15013</strain>
    </source>
</reference>
<protein>
    <recommendedName>
        <fullName evidence="1">Ribonuclease T</fullName>
        <ecNumber evidence="1">3.1.13.-</ecNumber>
    </recommendedName>
    <alternativeName>
        <fullName evidence="1">Exoribonuclease T</fullName>
        <shortName evidence="1">RNase T</shortName>
    </alternativeName>
</protein>